<protein>
    <recommendedName>
        <fullName evidence="1">4-hydroxy-tetrahydrodipicolinate synthase</fullName>
        <shortName evidence="1">HTPA synthase</shortName>
        <ecNumber evidence="1">4.3.3.7</ecNumber>
    </recommendedName>
</protein>
<dbReference type="EC" id="4.3.3.7" evidence="1"/>
<dbReference type="EMBL" id="CR931997">
    <property type="protein sequence ID" value="CAI37293.1"/>
    <property type="molecule type" value="Genomic_DNA"/>
</dbReference>
<dbReference type="RefSeq" id="WP_011273672.1">
    <property type="nucleotide sequence ID" value="NC_007164.1"/>
</dbReference>
<dbReference type="SMR" id="Q4JV64"/>
<dbReference type="STRING" id="306537.jk1129"/>
<dbReference type="GeneID" id="92738650"/>
<dbReference type="KEGG" id="cjk:jk1129"/>
<dbReference type="PATRIC" id="fig|306537.10.peg.1142"/>
<dbReference type="eggNOG" id="COG0329">
    <property type="taxonomic scope" value="Bacteria"/>
</dbReference>
<dbReference type="HOGENOM" id="CLU_049343_7_1_11"/>
<dbReference type="OrthoDB" id="9782828at2"/>
<dbReference type="UniPathway" id="UPA00034">
    <property type="reaction ID" value="UER00017"/>
</dbReference>
<dbReference type="Proteomes" id="UP000000545">
    <property type="component" value="Chromosome"/>
</dbReference>
<dbReference type="GO" id="GO:0005829">
    <property type="term" value="C:cytosol"/>
    <property type="evidence" value="ECO:0007669"/>
    <property type="project" value="TreeGrafter"/>
</dbReference>
<dbReference type="GO" id="GO:0008840">
    <property type="term" value="F:4-hydroxy-tetrahydrodipicolinate synthase activity"/>
    <property type="evidence" value="ECO:0007669"/>
    <property type="project" value="UniProtKB-UniRule"/>
</dbReference>
<dbReference type="GO" id="GO:0019877">
    <property type="term" value="P:diaminopimelate biosynthetic process"/>
    <property type="evidence" value="ECO:0007669"/>
    <property type="project" value="UniProtKB-UniRule"/>
</dbReference>
<dbReference type="GO" id="GO:0009089">
    <property type="term" value="P:lysine biosynthetic process via diaminopimelate"/>
    <property type="evidence" value="ECO:0007669"/>
    <property type="project" value="UniProtKB-UniRule"/>
</dbReference>
<dbReference type="CDD" id="cd00950">
    <property type="entry name" value="DHDPS"/>
    <property type="match status" value="1"/>
</dbReference>
<dbReference type="Gene3D" id="3.20.20.70">
    <property type="entry name" value="Aldolase class I"/>
    <property type="match status" value="1"/>
</dbReference>
<dbReference type="HAMAP" id="MF_00418">
    <property type="entry name" value="DapA"/>
    <property type="match status" value="1"/>
</dbReference>
<dbReference type="InterPro" id="IPR013785">
    <property type="entry name" value="Aldolase_TIM"/>
</dbReference>
<dbReference type="InterPro" id="IPR005263">
    <property type="entry name" value="DapA"/>
</dbReference>
<dbReference type="InterPro" id="IPR002220">
    <property type="entry name" value="DapA-like"/>
</dbReference>
<dbReference type="InterPro" id="IPR020625">
    <property type="entry name" value="Schiff_base-form_aldolases_AS"/>
</dbReference>
<dbReference type="InterPro" id="IPR020624">
    <property type="entry name" value="Schiff_base-form_aldolases_CS"/>
</dbReference>
<dbReference type="NCBIfam" id="TIGR00674">
    <property type="entry name" value="dapA"/>
    <property type="match status" value="1"/>
</dbReference>
<dbReference type="PANTHER" id="PTHR12128:SF66">
    <property type="entry name" value="4-HYDROXY-2-OXOGLUTARATE ALDOLASE, MITOCHONDRIAL"/>
    <property type="match status" value="1"/>
</dbReference>
<dbReference type="PANTHER" id="PTHR12128">
    <property type="entry name" value="DIHYDRODIPICOLINATE SYNTHASE"/>
    <property type="match status" value="1"/>
</dbReference>
<dbReference type="Pfam" id="PF00701">
    <property type="entry name" value="DHDPS"/>
    <property type="match status" value="1"/>
</dbReference>
<dbReference type="PIRSF" id="PIRSF001365">
    <property type="entry name" value="DHDPS"/>
    <property type="match status" value="1"/>
</dbReference>
<dbReference type="PRINTS" id="PR00146">
    <property type="entry name" value="DHPICSNTHASE"/>
</dbReference>
<dbReference type="SMART" id="SM01130">
    <property type="entry name" value="DHDPS"/>
    <property type="match status" value="1"/>
</dbReference>
<dbReference type="SUPFAM" id="SSF51569">
    <property type="entry name" value="Aldolase"/>
    <property type="match status" value="1"/>
</dbReference>
<dbReference type="PROSITE" id="PS00665">
    <property type="entry name" value="DHDPS_1"/>
    <property type="match status" value="1"/>
</dbReference>
<dbReference type="PROSITE" id="PS00666">
    <property type="entry name" value="DHDPS_2"/>
    <property type="match status" value="1"/>
</dbReference>
<organism>
    <name type="scientific">Corynebacterium jeikeium (strain K411)</name>
    <dbReference type="NCBI Taxonomy" id="306537"/>
    <lineage>
        <taxon>Bacteria</taxon>
        <taxon>Bacillati</taxon>
        <taxon>Actinomycetota</taxon>
        <taxon>Actinomycetes</taxon>
        <taxon>Mycobacteriales</taxon>
        <taxon>Corynebacteriaceae</taxon>
        <taxon>Corynebacterium</taxon>
    </lineage>
</organism>
<feature type="chain" id="PRO_1000050181" description="4-hydroxy-tetrahydrodipicolinate synthase">
    <location>
        <begin position="1"/>
        <end position="300"/>
    </location>
</feature>
<feature type="active site" description="Proton donor/acceptor" evidence="1">
    <location>
        <position position="145"/>
    </location>
</feature>
<feature type="active site" description="Schiff-base intermediate with substrate" evidence="1">
    <location>
        <position position="173"/>
    </location>
</feature>
<feature type="binding site" evidence="1">
    <location>
        <position position="57"/>
    </location>
    <ligand>
        <name>pyruvate</name>
        <dbReference type="ChEBI" id="CHEBI:15361"/>
    </ligand>
</feature>
<feature type="binding site" evidence="1">
    <location>
        <position position="213"/>
    </location>
    <ligand>
        <name>pyruvate</name>
        <dbReference type="ChEBI" id="CHEBI:15361"/>
    </ligand>
</feature>
<feature type="site" description="Part of a proton relay during catalysis" evidence="1">
    <location>
        <position position="56"/>
    </location>
</feature>
<feature type="site" description="Part of a proton relay during catalysis" evidence="1">
    <location>
        <position position="119"/>
    </location>
</feature>
<name>DAPA_CORJK</name>
<accession>Q4JV64</accession>
<proteinExistence type="inferred from homology"/>
<gene>
    <name evidence="1" type="primary">dapA</name>
    <name type="ordered locus">jk1129</name>
</gene>
<reference key="1">
    <citation type="journal article" date="2005" name="J. Bacteriol.">
        <title>Complete genome sequence and analysis of the multiresistant nosocomial pathogen Corynebacterium jeikeium K411, a lipid-requiring bacterium of the human skin flora.</title>
        <authorList>
            <person name="Tauch A."/>
            <person name="Kaiser O."/>
            <person name="Hain T."/>
            <person name="Goesmann A."/>
            <person name="Weisshaar B."/>
            <person name="Albersmeier A."/>
            <person name="Bekel T."/>
            <person name="Bischoff N."/>
            <person name="Brune I."/>
            <person name="Chakraborty T."/>
            <person name="Kalinowski J."/>
            <person name="Meyer F."/>
            <person name="Rupp O."/>
            <person name="Schneiker S."/>
            <person name="Viehoever P."/>
            <person name="Puehler A."/>
        </authorList>
    </citation>
    <scope>NUCLEOTIDE SEQUENCE [LARGE SCALE GENOMIC DNA]</scope>
    <source>
        <strain>K411</strain>
    </source>
</reference>
<evidence type="ECO:0000255" key="1">
    <source>
        <dbReference type="HAMAP-Rule" id="MF_00418"/>
    </source>
</evidence>
<evidence type="ECO:0000305" key="2"/>
<comment type="function">
    <text evidence="1">Catalyzes the condensation of (S)-aspartate-beta-semialdehyde [(S)-ASA] and pyruvate to 4-hydroxy-tetrahydrodipicolinate (HTPA).</text>
</comment>
<comment type="catalytic activity">
    <reaction evidence="1">
        <text>L-aspartate 4-semialdehyde + pyruvate = (2S,4S)-4-hydroxy-2,3,4,5-tetrahydrodipicolinate + H2O + H(+)</text>
        <dbReference type="Rhea" id="RHEA:34171"/>
        <dbReference type="ChEBI" id="CHEBI:15361"/>
        <dbReference type="ChEBI" id="CHEBI:15377"/>
        <dbReference type="ChEBI" id="CHEBI:15378"/>
        <dbReference type="ChEBI" id="CHEBI:67139"/>
        <dbReference type="ChEBI" id="CHEBI:537519"/>
        <dbReference type="EC" id="4.3.3.7"/>
    </reaction>
</comment>
<comment type="pathway">
    <text evidence="1">Amino-acid biosynthesis; L-lysine biosynthesis via DAP pathway; (S)-tetrahydrodipicolinate from L-aspartate: step 3/4.</text>
</comment>
<comment type="subunit">
    <text evidence="1">Homotetramer; dimer of dimers.</text>
</comment>
<comment type="subcellular location">
    <subcellularLocation>
        <location evidence="1">Cytoplasm</location>
    </subcellularLocation>
</comment>
<comment type="similarity">
    <text evidence="1">Belongs to the DapA family.</text>
</comment>
<comment type="caution">
    <text evidence="2">Was originally thought to be a dihydrodipicolinate synthase (DHDPS), catalyzing the condensation of (S)-aspartate-beta-semialdehyde [(S)-ASA] and pyruvate to dihydrodipicolinate (DHDP). However, it was shown in E.coli that the product of the enzymatic reaction is not dihydrodipicolinate but in fact (4S)-4-hydroxy-2,3,4,5-tetrahydro-(2S)-dipicolinic acid (HTPA), and that the consecutive dehydration reaction leading to DHDP is not spontaneous but catalyzed by DapB.</text>
</comment>
<keyword id="KW-0028">Amino-acid biosynthesis</keyword>
<keyword id="KW-0963">Cytoplasm</keyword>
<keyword id="KW-0220">Diaminopimelate biosynthesis</keyword>
<keyword id="KW-0456">Lyase</keyword>
<keyword id="KW-0457">Lysine biosynthesis</keyword>
<keyword id="KW-1185">Reference proteome</keyword>
<keyword id="KW-0704">Schiff base</keyword>
<sequence length="300" mass="31293">MSTGNAATRGSAHFGTISLAMVTPFKKDGSIDLDAGVALAGHFVDEGCDSLVLAGTTGESPTTGATEKLDLLRAVRSELGDSVKLIAGSGSYDTAVTVEMSRASQEAGADSLLVVTPYYSRPSQEGIYQHFTTVADAVDIPVCVYDIPSRSVVPVEPETLHRLADHPQIAAVKDAKGDLAAGMELIENTDLAWYSGDDPLNLPWLAAGATGFISVIGHVATRQLKQLRDAFDAGDIATARSIAVQLQPLQKAQARLGGVTFAKAALKLKGKDVGAPRLPIIEPTAAEMDQLAQDLQAAGV</sequence>